<reference key="1">
    <citation type="submission" date="2011-08" db="EMBL/GenBank/DDBJ databases">
        <title>Cloning of cDNAs encoding a lysine rich protein At168.</title>
        <authorList>
            <person name="Zhao Q."/>
            <person name="Ou G."/>
            <person name="Yu J."/>
        </authorList>
    </citation>
    <scope>NUCLEOTIDE SEQUENCE [MRNA] (ISOFORM 1)</scope>
</reference>
<reference key="2">
    <citation type="submission" date="1999-02" db="EMBL/GenBank/DDBJ databases">
        <title>Structural analysis of Arabidopsis thaliana chromosome 5. XI.</title>
        <authorList>
            <person name="Kaneko T."/>
            <person name="Katoh T."/>
            <person name="Asamizu E."/>
            <person name="Sato S."/>
            <person name="Nakamura Y."/>
            <person name="Kotani H."/>
            <person name="Tabata S."/>
        </authorList>
    </citation>
    <scope>NUCLEOTIDE SEQUENCE [LARGE SCALE GENOMIC DNA]</scope>
    <source>
        <strain>cv. Columbia</strain>
    </source>
</reference>
<reference key="3">
    <citation type="journal article" date="2017" name="Plant J.">
        <title>Araport11: a complete reannotation of the Arabidopsis thaliana reference genome.</title>
        <authorList>
            <person name="Cheng C.Y."/>
            <person name="Krishnakumar V."/>
            <person name="Chan A.P."/>
            <person name="Thibaud-Nissen F."/>
            <person name="Schobel S."/>
            <person name="Town C.D."/>
        </authorList>
    </citation>
    <scope>GENOME REANNOTATION</scope>
    <source>
        <strain>cv. Columbia</strain>
    </source>
</reference>
<reference key="4">
    <citation type="journal article" date="2002" name="Science">
        <title>Functional annotation of a full-length Arabidopsis cDNA collection.</title>
        <authorList>
            <person name="Seki M."/>
            <person name="Narusaka M."/>
            <person name="Kamiya A."/>
            <person name="Ishida J."/>
            <person name="Satou M."/>
            <person name="Sakurai T."/>
            <person name="Nakajima M."/>
            <person name="Enju A."/>
            <person name="Akiyama K."/>
            <person name="Oono Y."/>
            <person name="Muramatsu M."/>
            <person name="Hayashizaki Y."/>
            <person name="Kawai J."/>
            <person name="Carninci P."/>
            <person name="Itoh M."/>
            <person name="Ishii Y."/>
            <person name="Arakawa T."/>
            <person name="Shibata K."/>
            <person name="Shinagawa A."/>
            <person name="Shinozaki K."/>
        </authorList>
    </citation>
    <scope>NUCLEOTIDE SEQUENCE [LARGE SCALE MRNA] (ISOFORM 1)</scope>
    <source>
        <strain>cv. Columbia</strain>
    </source>
</reference>
<reference key="5">
    <citation type="journal article" date="2003" name="Science">
        <title>Empirical analysis of transcriptional activity in the Arabidopsis genome.</title>
        <authorList>
            <person name="Yamada K."/>
            <person name="Lim J."/>
            <person name="Dale J.M."/>
            <person name="Chen H."/>
            <person name="Shinn P."/>
            <person name="Palm C.J."/>
            <person name="Southwick A.M."/>
            <person name="Wu H.C."/>
            <person name="Kim C.J."/>
            <person name="Nguyen M."/>
            <person name="Pham P.K."/>
            <person name="Cheuk R.F."/>
            <person name="Karlin-Newmann G."/>
            <person name="Liu S.X."/>
            <person name="Lam B."/>
            <person name="Sakano H."/>
            <person name="Wu T."/>
            <person name="Yu G."/>
            <person name="Miranda M."/>
            <person name="Quach H.L."/>
            <person name="Tripp M."/>
            <person name="Chang C.H."/>
            <person name="Lee J.M."/>
            <person name="Toriumi M.J."/>
            <person name="Chan M.M."/>
            <person name="Tang C.C."/>
            <person name="Onodera C.S."/>
            <person name="Deng J.M."/>
            <person name="Akiyama K."/>
            <person name="Ansari Y."/>
            <person name="Arakawa T."/>
            <person name="Banh J."/>
            <person name="Banno F."/>
            <person name="Bowser L."/>
            <person name="Brooks S.Y."/>
            <person name="Carninci P."/>
            <person name="Chao Q."/>
            <person name="Choy N."/>
            <person name="Enju A."/>
            <person name="Goldsmith A.D."/>
            <person name="Gurjal M."/>
            <person name="Hansen N.F."/>
            <person name="Hayashizaki Y."/>
            <person name="Johnson-Hopson C."/>
            <person name="Hsuan V.W."/>
            <person name="Iida K."/>
            <person name="Karnes M."/>
            <person name="Khan S."/>
            <person name="Koesema E."/>
            <person name="Ishida J."/>
            <person name="Jiang P.X."/>
            <person name="Jones T."/>
            <person name="Kawai J."/>
            <person name="Kamiya A."/>
            <person name="Meyers C."/>
            <person name="Nakajima M."/>
            <person name="Narusaka M."/>
            <person name="Seki M."/>
            <person name="Sakurai T."/>
            <person name="Satou M."/>
            <person name="Tamse R."/>
            <person name="Vaysberg M."/>
            <person name="Wallender E.K."/>
            <person name="Wong C."/>
            <person name="Yamamura Y."/>
            <person name="Yuan S."/>
            <person name="Shinozaki K."/>
            <person name="Davis R.W."/>
            <person name="Theologis A."/>
            <person name="Ecker J.R."/>
        </authorList>
    </citation>
    <scope>NUCLEOTIDE SEQUENCE [LARGE SCALE MRNA] (ISOFORM 1)</scope>
    <source>
        <strain>cv. Columbia</strain>
    </source>
</reference>
<reference key="6">
    <citation type="journal article" date="2009" name="DNA Res.">
        <title>Analysis of multiple occurrences of alternative splicing events in Arabidopsis thaliana using novel sequenced full-length cDNAs.</title>
        <authorList>
            <person name="Iida K."/>
            <person name="Fukami-Kobayashi K."/>
            <person name="Toyoda A."/>
            <person name="Sakaki Y."/>
            <person name="Kobayashi M."/>
            <person name="Seki M."/>
            <person name="Shinozaki K."/>
        </authorList>
    </citation>
    <scope>NUCLEOTIDE SEQUENCE [LARGE SCALE MRNA] (ISOFORM 2)</scope>
    <source>
        <strain>cv. Columbia</strain>
    </source>
</reference>
<reference key="7">
    <citation type="journal article" date="2007" name="Plant Cell">
        <title>Arabidopsis MICROTUBULE-ASSOCIATED PROTEIN18 functions in directional cell growth by destabilizing cortical microtubules.</title>
        <authorList>
            <person name="Wang X."/>
            <person name="Zhu L."/>
            <person name="Liu B."/>
            <person name="Wang C."/>
            <person name="Jin L."/>
            <person name="Zhao Q."/>
            <person name="Yuan M."/>
        </authorList>
    </citation>
    <scope>FUNCTION</scope>
    <scope>SUBUNIT</scope>
    <scope>SUBCELLULAR LOCATION</scope>
    <scope>TISSUE SPECIFICITY</scope>
    <scope>DISRUPTION PHENOTYPE</scope>
    <scope>REPEATS</scope>
</reference>
<reference key="8">
    <citation type="journal article" date="2008" name="BMC Plant Biol.">
        <title>Transcriptional responses of Arabidopsis thaliana plants to As (V) stress.</title>
        <authorList>
            <person name="Abercrombie J.M."/>
            <person name="Halfhill M.D."/>
            <person name="Ranjan P."/>
            <person name="Rao M.R."/>
            <person name="Saxton A.M."/>
            <person name="Yuan J.S."/>
            <person name="Stewart C.N. Jr."/>
        </authorList>
    </citation>
    <scope>INDUCTION BY ARSENATE</scope>
</reference>
<reference key="9">
    <citation type="journal article" date="2010" name="Plant Cell Physiol.">
        <title>An Arabidopsis hydrophilic Ca2(+) -binding protein with a PEVK-rich domain, PCaP2, is associated with the plasma membrane and interacts with calmodulin and phosphatidylinositol phosphates.</title>
        <authorList>
            <person name="Kato M."/>
            <person name="Nagasaki-Takeuchi N."/>
            <person name="Ide Y."/>
            <person name="Maeshima M."/>
        </authorList>
    </citation>
    <scope>SUBUNIT</scope>
    <scope>SUBCELLULAR LOCATION</scope>
    <scope>TISSUE SPECIFICITY</scope>
    <scope>DEVELOPMENTAL STAGE</scope>
    <scope>INDUCTION BY BIOTIC AND ABIOTIC STRESSES</scope>
    <scope>MYRISTOYLATION AT GLY-2</scope>
    <scope>MUTAGENESIS OF GLY-2</scope>
</reference>
<reference key="10">
    <citation type="journal article" date="2010" name="Plant Physiol.">
        <title>Leaf senescence is accompanied by an early disruption of the microtubule network in Arabidopsis.</title>
        <authorList>
            <person name="Keech O."/>
            <person name="Pesquet E."/>
            <person name="Gutierrez L."/>
            <person name="Ahad A."/>
            <person name="Bellini C."/>
            <person name="Smith S.M."/>
            <person name="Gardestroem P."/>
        </authorList>
    </citation>
    <scope>INDUCTION BY SENESCENCE</scope>
</reference>
<reference key="11">
    <citation type="journal article" date="2010" name="Plant Signal. Behav.">
        <title>PCaPs, possible regulators of PtdInsP signals on plasma membrane.</title>
        <authorList>
            <person name="Kato M."/>
            <person name="Nagasaki-Takeuchi N."/>
            <person name="Ide Y."/>
            <person name="Tomioka R."/>
            <person name="Maeshima M."/>
        </authorList>
    </citation>
    <scope>FUNCTION</scope>
    <scope>REVIEW</scope>
</reference>
<proteinExistence type="evidence at protein level"/>
<sequence length="168" mass="18549">MGYWKSKVVPRMKKLFEKSPAKKEVVEEEKPREVEVVEEVVVKTEEPAKEGETKPEEIIATGEKEIEIVEEKKEEAKPVEVPVLAAAEEKKPAVEEEKKTAPVEEKKPAVEEEKKPAVEEKKPVEEEKKEVVAAVPVAETPSTKAPETPVVETPAKAPETPAAAPQKA</sequence>
<feature type="initiator methionine" description="Removed" evidence="6">
    <location>
        <position position="1"/>
    </location>
</feature>
<feature type="chain" id="PRO_0000431913" description="Plasma membrane-associated cation-binding protein 2">
    <location>
        <begin position="2"/>
        <end position="168"/>
    </location>
</feature>
<feature type="repeat" description="1">
    <location>
        <begin position="26"/>
        <end position="30"/>
    </location>
</feature>
<feature type="repeat" description="2">
    <location>
        <begin position="69"/>
        <end position="73"/>
    </location>
</feature>
<feature type="repeat" description="3">
    <location>
        <begin position="94"/>
        <end position="99"/>
    </location>
</feature>
<feature type="repeat" description="4">
    <location>
        <begin position="103"/>
        <end position="107"/>
    </location>
</feature>
<feature type="repeat" description="5">
    <location>
        <begin position="110"/>
        <end position="115"/>
    </location>
</feature>
<feature type="repeat" description="6">
    <location>
        <begin position="118"/>
        <end position="122"/>
    </location>
</feature>
<feature type="repeat" description="7">
    <location>
        <begin position="124"/>
        <end position="129"/>
    </location>
</feature>
<feature type="region of interest" description="7 X 5 AA approximate repeats of V-E-E-K-K">
    <location>
        <begin position="26"/>
        <end position="129"/>
    </location>
</feature>
<feature type="region of interest" description="Disordered" evidence="3">
    <location>
        <begin position="88"/>
        <end position="168"/>
    </location>
</feature>
<feature type="coiled-coil region" evidence="2">
    <location>
        <begin position="56"/>
        <end position="77"/>
    </location>
</feature>
<feature type="compositionally biased region" description="Basic and acidic residues" evidence="3">
    <location>
        <begin position="88"/>
        <end position="131"/>
    </location>
</feature>
<feature type="compositionally biased region" description="Low complexity" evidence="3">
    <location>
        <begin position="152"/>
        <end position="168"/>
    </location>
</feature>
<feature type="lipid moiety-binding region" description="N-myristoyl glycine" evidence="6">
    <location>
        <position position="2"/>
    </location>
</feature>
<feature type="splice variant" id="VSP_057466" description="In isoform 2.">
    <location>
        <begin position="69"/>
        <end position="117"/>
    </location>
</feature>
<feature type="mutagenesis site" description="Loss of plasma membrane localization, but accumulates into the cytoplasm." evidence="6">
    <original>G</original>
    <variation>A</variation>
    <location>
        <position position="2"/>
    </location>
</feature>
<keyword id="KW-0025">Alternative splicing</keyword>
<keyword id="KW-0106">Calcium</keyword>
<keyword id="KW-0112">Calmodulin-binding</keyword>
<keyword id="KW-1003">Cell membrane</keyword>
<keyword id="KW-0133">Cell shape</keyword>
<keyword id="KW-0175">Coiled coil</keyword>
<keyword id="KW-0186">Copper</keyword>
<keyword id="KW-0963">Cytoplasm</keyword>
<keyword id="KW-0206">Cytoskeleton</keyword>
<keyword id="KW-0446">Lipid-binding</keyword>
<keyword id="KW-0449">Lipoprotein</keyword>
<keyword id="KW-0472">Membrane</keyword>
<keyword id="KW-0493">Microtubule</keyword>
<keyword id="KW-0519">Myristate</keyword>
<keyword id="KW-1185">Reference proteome</keyword>
<keyword id="KW-0677">Repeat</keyword>
<protein>
    <recommendedName>
        <fullName evidence="9">Plasma membrane-associated cation-binding protein 2</fullName>
        <shortName evidence="9">AtPCAP2</shortName>
    </recommendedName>
    <alternativeName>
        <fullName evidence="10">Lysine rich protein At168</fullName>
    </alternativeName>
    <alternativeName>
        <fullName evidence="8">Microtubule-associated protein 18</fullName>
    </alternativeName>
</protein>
<organism evidence="14">
    <name type="scientific">Arabidopsis thaliana</name>
    <name type="common">Mouse-ear cress</name>
    <dbReference type="NCBI Taxonomy" id="3702"/>
    <lineage>
        <taxon>Eukaryota</taxon>
        <taxon>Viridiplantae</taxon>
        <taxon>Streptophyta</taxon>
        <taxon>Embryophyta</taxon>
        <taxon>Tracheophyta</taxon>
        <taxon>Spermatophyta</taxon>
        <taxon>Magnoliopsida</taxon>
        <taxon>eudicotyledons</taxon>
        <taxon>Gunneridae</taxon>
        <taxon>Pentapetalae</taxon>
        <taxon>rosids</taxon>
        <taxon>malvids</taxon>
        <taxon>Brassicales</taxon>
        <taxon>Brassicaceae</taxon>
        <taxon>Camelineae</taxon>
        <taxon>Arabidopsis</taxon>
    </lineage>
</organism>
<name>PCAP2_ARATH</name>
<dbReference type="EMBL" id="JN624857">
    <property type="protein sequence ID" value="AEO93269.1"/>
    <property type="molecule type" value="mRNA"/>
</dbReference>
<dbReference type="EMBL" id="AB024024">
    <property type="protein sequence ID" value="BAA98114.1"/>
    <property type="molecule type" value="Genomic_DNA"/>
</dbReference>
<dbReference type="EMBL" id="CP002688">
    <property type="protein sequence ID" value="AED95138.1"/>
    <property type="molecule type" value="Genomic_DNA"/>
</dbReference>
<dbReference type="EMBL" id="CP002688">
    <property type="protein sequence ID" value="ANM69874.1"/>
    <property type="molecule type" value="Genomic_DNA"/>
</dbReference>
<dbReference type="EMBL" id="CP002688">
    <property type="protein sequence ID" value="ANM69875.1"/>
    <property type="molecule type" value="Genomic_DNA"/>
</dbReference>
<dbReference type="EMBL" id="AK117253">
    <property type="protein sequence ID" value="BAC41928.1"/>
    <property type="molecule type" value="mRNA"/>
</dbReference>
<dbReference type="EMBL" id="BT003705">
    <property type="protein sequence ID" value="AAO39933.1"/>
    <property type="molecule type" value="mRNA"/>
</dbReference>
<dbReference type="EMBL" id="AK318858">
    <property type="protein sequence ID" value="BAH56973.1"/>
    <property type="molecule type" value="mRNA"/>
</dbReference>
<dbReference type="RefSeq" id="NP_001331521.1">
    <molecule id="Q9LU05-1"/>
    <property type="nucleotide sequence ID" value="NM_001344569.1"/>
</dbReference>
<dbReference type="RefSeq" id="NP_001331522.1">
    <molecule id="Q9LU05-1"/>
    <property type="nucleotide sequence ID" value="NM_001344568.1"/>
</dbReference>
<dbReference type="RefSeq" id="NP_568636.1">
    <molecule id="Q9LU05-1"/>
    <property type="nucleotide sequence ID" value="NM_123828.4"/>
</dbReference>
<dbReference type="SMR" id="Q9LU05"/>
<dbReference type="STRING" id="3702.Q9LU05"/>
<dbReference type="iPTMnet" id="Q9LU05"/>
<dbReference type="PaxDb" id="3702-AT5G44610.1"/>
<dbReference type="ProteomicsDB" id="236710">
    <molecule id="Q9LU05-1"/>
</dbReference>
<dbReference type="EnsemblPlants" id="AT5G44610.1">
    <molecule id="Q9LU05-1"/>
    <property type="protein sequence ID" value="AT5G44610.1"/>
    <property type="gene ID" value="AT5G44610"/>
</dbReference>
<dbReference type="EnsemblPlants" id="AT5G44610.2">
    <molecule id="Q9LU05-1"/>
    <property type="protein sequence ID" value="AT5G44610.2"/>
    <property type="gene ID" value="AT5G44610"/>
</dbReference>
<dbReference type="EnsemblPlants" id="AT5G44610.3">
    <molecule id="Q9LU05-1"/>
    <property type="protein sequence ID" value="AT5G44610.3"/>
    <property type="gene ID" value="AT5G44610"/>
</dbReference>
<dbReference type="GeneID" id="834489"/>
<dbReference type="Gramene" id="AT5G44610.1">
    <molecule id="Q9LU05-1"/>
    <property type="protein sequence ID" value="AT5G44610.1"/>
    <property type="gene ID" value="AT5G44610"/>
</dbReference>
<dbReference type="Gramene" id="AT5G44610.2">
    <molecule id="Q9LU05-1"/>
    <property type="protein sequence ID" value="AT5G44610.2"/>
    <property type="gene ID" value="AT5G44610"/>
</dbReference>
<dbReference type="Gramene" id="AT5G44610.3">
    <molecule id="Q9LU05-1"/>
    <property type="protein sequence ID" value="AT5G44610.3"/>
    <property type="gene ID" value="AT5G44610"/>
</dbReference>
<dbReference type="KEGG" id="ath:AT5G44610"/>
<dbReference type="Araport" id="AT5G44610"/>
<dbReference type="TAIR" id="AT5G44610">
    <property type="gene designation" value="MAP18"/>
</dbReference>
<dbReference type="HOGENOM" id="CLU_1646033_0_0_1"/>
<dbReference type="InParanoid" id="Q9LU05"/>
<dbReference type="OMA" id="FSSWYIF"/>
<dbReference type="PRO" id="PR:Q9LU05"/>
<dbReference type="Proteomes" id="UP000006548">
    <property type="component" value="Chromosome 5"/>
</dbReference>
<dbReference type="ExpressionAtlas" id="Q9LU05">
    <property type="expression patterns" value="baseline and differential"/>
</dbReference>
<dbReference type="GO" id="GO:0005737">
    <property type="term" value="C:cytoplasm"/>
    <property type="evidence" value="ECO:0007669"/>
    <property type="project" value="UniProtKB-KW"/>
</dbReference>
<dbReference type="GO" id="GO:0005874">
    <property type="term" value="C:microtubule"/>
    <property type="evidence" value="ECO:0007669"/>
    <property type="project" value="UniProtKB-KW"/>
</dbReference>
<dbReference type="GO" id="GO:0005886">
    <property type="term" value="C:plasma membrane"/>
    <property type="evidence" value="ECO:0000314"/>
    <property type="project" value="TAIR"/>
</dbReference>
<dbReference type="GO" id="GO:0090406">
    <property type="term" value="C:pollen tube"/>
    <property type="evidence" value="ECO:0000314"/>
    <property type="project" value="TAIR"/>
</dbReference>
<dbReference type="GO" id="GO:0005545">
    <property type="term" value="F:1-phosphatidylinositol binding"/>
    <property type="evidence" value="ECO:0000314"/>
    <property type="project" value="TAIR"/>
</dbReference>
<dbReference type="GO" id="GO:0005516">
    <property type="term" value="F:calmodulin binding"/>
    <property type="evidence" value="ECO:0000314"/>
    <property type="project" value="TAIR"/>
</dbReference>
<dbReference type="GO" id="GO:0008017">
    <property type="term" value="F:microtubule binding"/>
    <property type="evidence" value="ECO:0000314"/>
    <property type="project" value="TAIR"/>
</dbReference>
<dbReference type="GO" id="GO:1901981">
    <property type="term" value="F:phosphatidylinositol phosphate binding"/>
    <property type="evidence" value="ECO:0000314"/>
    <property type="project" value="TAIR"/>
</dbReference>
<dbReference type="GO" id="GO:0038023">
    <property type="term" value="F:signaling receptor activity"/>
    <property type="evidence" value="ECO:0000314"/>
    <property type="project" value="TAIR"/>
</dbReference>
<dbReference type="GO" id="GO:0000902">
    <property type="term" value="P:cell morphogenesis"/>
    <property type="evidence" value="ECO:0000315"/>
    <property type="project" value="TAIR"/>
</dbReference>
<dbReference type="GO" id="GO:0043622">
    <property type="term" value="P:cortical microtubule organization"/>
    <property type="evidence" value="ECO:0000315"/>
    <property type="project" value="TAIR"/>
</dbReference>
<dbReference type="GO" id="GO:0010150">
    <property type="term" value="P:leaf senescence"/>
    <property type="evidence" value="ECO:0000270"/>
    <property type="project" value="TAIR"/>
</dbReference>
<dbReference type="GO" id="GO:0031115">
    <property type="term" value="P:negative regulation of microtubule polymerization"/>
    <property type="evidence" value="ECO:0000314"/>
    <property type="project" value="TAIR"/>
</dbReference>
<dbReference type="GO" id="GO:0008360">
    <property type="term" value="P:regulation of cell shape"/>
    <property type="evidence" value="ECO:0007669"/>
    <property type="project" value="UniProtKB-KW"/>
</dbReference>
<dbReference type="GO" id="GO:0009737">
    <property type="term" value="P:response to abscisic acid"/>
    <property type="evidence" value="ECO:0000270"/>
    <property type="project" value="TAIR"/>
</dbReference>
<dbReference type="GO" id="GO:0046685">
    <property type="term" value="P:response to arsenic-containing substance"/>
    <property type="evidence" value="ECO:0000270"/>
    <property type="project" value="UniProtKB"/>
</dbReference>
<dbReference type="GO" id="GO:0009409">
    <property type="term" value="P:response to cold"/>
    <property type="evidence" value="ECO:0000270"/>
    <property type="project" value="TAIR"/>
</dbReference>
<dbReference type="GO" id="GO:0009739">
    <property type="term" value="P:response to gibberellin"/>
    <property type="evidence" value="ECO:0000270"/>
    <property type="project" value="TAIR"/>
</dbReference>
<dbReference type="GO" id="GO:0010038">
    <property type="term" value="P:response to metal ion"/>
    <property type="evidence" value="ECO:0000270"/>
    <property type="project" value="TAIR"/>
</dbReference>
<dbReference type="GO" id="GO:0009651">
    <property type="term" value="P:response to salt stress"/>
    <property type="evidence" value="ECO:0000270"/>
    <property type="project" value="TAIR"/>
</dbReference>
<dbReference type="GO" id="GO:0048768">
    <property type="term" value="P:root hair cell tip growth"/>
    <property type="evidence" value="ECO:0000315"/>
    <property type="project" value="TAIR"/>
</dbReference>
<dbReference type="GO" id="GO:0007165">
    <property type="term" value="P:signal transduction"/>
    <property type="evidence" value="ECO:0000304"/>
    <property type="project" value="TAIR"/>
</dbReference>
<dbReference type="InterPro" id="IPR008469">
    <property type="entry name" value="DREPP"/>
</dbReference>
<dbReference type="PANTHER" id="PTHR38522:SF4">
    <property type="entry name" value="GENOME ASSEMBLY, CHROMOSOME: A09"/>
    <property type="match status" value="1"/>
</dbReference>
<dbReference type="PANTHER" id="PTHR38522">
    <property type="entry name" value="PLASMA MEMBRANE-ASSOCIATED CATION-BINDING PROTEIN 1"/>
    <property type="match status" value="1"/>
</dbReference>
<dbReference type="Pfam" id="PF05558">
    <property type="entry name" value="DREPP"/>
    <property type="match status" value="1"/>
</dbReference>
<evidence type="ECO:0000250" key="1">
    <source>
        <dbReference type="UniProtKB" id="Q96262"/>
    </source>
</evidence>
<evidence type="ECO:0000255" key="2"/>
<evidence type="ECO:0000256" key="3">
    <source>
        <dbReference type="SAM" id="MobiDB-lite"/>
    </source>
</evidence>
<evidence type="ECO:0000269" key="4">
    <source>
    </source>
</evidence>
<evidence type="ECO:0000269" key="5">
    <source>
    </source>
</evidence>
<evidence type="ECO:0000269" key="6">
    <source>
    </source>
</evidence>
<evidence type="ECO:0000269" key="7">
    <source>
    </source>
</evidence>
<evidence type="ECO:0000303" key="8">
    <source>
    </source>
</evidence>
<evidence type="ECO:0000303" key="9">
    <source>
    </source>
</evidence>
<evidence type="ECO:0000303" key="10">
    <source ref="1"/>
</evidence>
<evidence type="ECO:0000305" key="11"/>
<evidence type="ECO:0000305" key="12">
    <source>
    </source>
</evidence>
<evidence type="ECO:0000312" key="13">
    <source>
        <dbReference type="Araport" id="AT5G44610"/>
    </source>
</evidence>
<evidence type="ECO:0000312" key="14">
    <source>
        <dbReference type="EMBL" id="BAA98114.1"/>
    </source>
</evidence>
<evidence type="ECO:0000312" key="15">
    <source>
        <dbReference type="EMBL" id="BAC41928.1"/>
    </source>
</evidence>
<accession>Q9LU05</accession>
<accession>C0Z2P4</accession>
<comment type="function">
    <text evidence="1 4 12">May be involved in intracellular signaling through interaction with PtdInsPs and calmodulin (CaM); may keep PtdInsPs attached to the plasma membrane until Ca(2+)-CaM reaches a competitive concentration subsequent to an increase triggered by a stimulus, thus leading to PtdInsPs release and subsequent activation of InsPs-dependent signaling cascade (Probable). Binds to microtubules and inhibits tubulin polymerization. Regulates directional cell growth and cortical microtubule organization by destabilizing microtubules (e.g. in cotyledon pavement cells) (PubMed:17337629).</text>
</comment>
<comment type="cofactor">
    <cofactor evidence="1">
        <name>Cu(2+)</name>
        <dbReference type="ChEBI" id="CHEBI:29036"/>
    </cofactor>
</comment>
<comment type="subunit">
    <text evidence="4 6">Binds microtubules (PubMed:17337629). Interacts with calcium ion Ca(2+), calmodulin and some phosphatidylinositol phosphates (PtdInsPs) such as phosphatidylinositol 3,5-bisphosphate [PtdIns(3,5)P(2)], PtdIns(4,5)P(2) and PtdIns(3,4,5)P(3) (PubMed:20061304).</text>
</comment>
<comment type="subcellular location">
    <subcellularLocation>
        <location evidence="6">Cell membrane</location>
        <topology evidence="6">Lipid-anchor</topology>
    </subcellularLocation>
    <subcellularLocation>
        <location evidence="4">Cytoplasm</location>
        <location evidence="4">Cytoskeleton</location>
    </subcellularLocation>
    <text evidence="4">Localized along cortical microtubules as patches of dot-like structures.</text>
</comment>
<comment type="alternative products">
    <event type="alternative splicing"/>
    <isoform>
        <id>Q9LU05-1</id>
        <name>1</name>
        <sequence type="displayed"/>
    </isoform>
    <isoform>
        <id>Q9LU05-2</id>
        <name>2</name>
        <sequence type="described" ref="VSP_057466"/>
    </isoform>
</comment>
<comment type="tissue specificity">
    <text evidence="4 6">Mostly expressed in the expanding cells, specifically in roots (except in root tips) and flowers (at protein level). Also detected in cotyledons, hypocotyls and trichome stalks.</text>
</comment>
<comment type="developmental stage">
    <text evidence="6">Expressed in developing root hairs and elongating pollen tubes.</text>
</comment>
<comment type="induction">
    <text evidence="5 6 7">By arsenate As (V) (PubMed:18684332). Accumulates in response to abscisic acid (ABA), gibberellic acid (GA), cold, and drought stresses. Induced by various salt treatments such as NaCl, KCl, MgCl(2), MnCl(2) and ZnCl(2) (PubMed:20061304). Expressed during leaf senescence (PubMed:20966154).</text>
</comment>
<comment type="disruption phenotype">
    <text evidence="4">Altered cortical microtubule arrays. Abnormal cotyledon pavement cells with fewer extension lobes and shorter cell length.</text>
</comment>
<comment type="similarity">
    <text evidence="11">Belongs to the DREPP family.</text>
</comment>
<gene>
    <name evidence="9" type="primary">PCAP2</name>
    <name evidence="8" type="synonym">MAP18</name>
    <name evidence="13" type="ordered locus">At5g44610</name>
    <name evidence="15" type="ORF">K15C23.5</name>
</gene>